<evidence type="ECO:0000255" key="1">
    <source>
        <dbReference type="HAMAP-Rule" id="MF_00056"/>
    </source>
</evidence>
<protein>
    <recommendedName>
        <fullName evidence="1">2-dehydro-3-deoxyphosphooctonate aldolase</fullName>
        <ecNumber evidence="1">2.5.1.55</ecNumber>
    </recommendedName>
    <alternativeName>
        <fullName evidence="1">3-deoxy-D-manno-octulosonic acid 8-phosphate synthase</fullName>
    </alternativeName>
    <alternativeName>
        <fullName evidence="1">KDO-8-phosphate synthase</fullName>
        <shortName evidence="1">KDO 8-P synthase</shortName>
        <shortName evidence="1">KDOPS</shortName>
    </alternativeName>
    <alternativeName>
        <fullName evidence="1">Phospho-2-dehydro-3-deoxyoctonate aldolase</fullName>
    </alternativeName>
</protein>
<proteinExistence type="inferred from homology"/>
<feature type="chain" id="PRO_1000091806" description="2-dehydro-3-deoxyphosphooctonate aldolase">
    <location>
        <begin position="1"/>
        <end position="280"/>
    </location>
</feature>
<gene>
    <name evidence="1" type="primary">kdsA</name>
    <name type="ordered locus">CbuK_0335</name>
</gene>
<organism>
    <name type="scientific">Coxiella burnetii (strain CbuK_Q154)</name>
    <name type="common">Coxiella burnetii (strain Q154)</name>
    <dbReference type="NCBI Taxonomy" id="434924"/>
    <lineage>
        <taxon>Bacteria</taxon>
        <taxon>Pseudomonadati</taxon>
        <taxon>Pseudomonadota</taxon>
        <taxon>Gammaproteobacteria</taxon>
        <taxon>Legionellales</taxon>
        <taxon>Coxiellaceae</taxon>
        <taxon>Coxiella</taxon>
    </lineage>
</organism>
<accession>B6J4X2</accession>
<keyword id="KW-0963">Cytoplasm</keyword>
<keyword id="KW-0448">Lipopolysaccharide biosynthesis</keyword>
<keyword id="KW-0808">Transferase</keyword>
<comment type="catalytic activity">
    <reaction evidence="1">
        <text>D-arabinose 5-phosphate + phosphoenolpyruvate + H2O = 3-deoxy-alpha-D-manno-2-octulosonate-8-phosphate + phosphate</text>
        <dbReference type="Rhea" id="RHEA:14053"/>
        <dbReference type="ChEBI" id="CHEBI:15377"/>
        <dbReference type="ChEBI" id="CHEBI:43474"/>
        <dbReference type="ChEBI" id="CHEBI:57693"/>
        <dbReference type="ChEBI" id="CHEBI:58702"/>
        <dbReference type="ChEBI" id="CHEBI:85985"/>
        <dbReference type="EC" id="2.5.1.55"/>
    </reaction>
</comment>
<comment type="pathway">
    <text evidence="1">Carbohydrate biosynthesis; 3-deoxy-D-manno-octulosonate biosynthesis; 3-deoxy-D-manno-octulosonate from D-ribulose 5-phosphate: step 2/3.</text>
</comment>
<comment type="pathway">
    <text evidence="1">Bacterial outer membrane biogenesis; lipopolysaccharide biosynthesis.</text>
</comment>
<comment type="subcellular location">
    <subcellularLocation>
        <location evidence="1">Cytoplasm</location>
    </subcellularLocation>
</comment>
<comment type="similarity">
    <text evidence="1">Belongs to the KdsA family.</text>
</comment>
<name>KDSA_COXB1</name>
<reference key="1">
    <citation type="journal article" date="2009" name="Infect. Immun.">
        <title>Comparative genomics reveal extensive transposon-mediated genomic plasticity and diversity among potential effector proteins within the genus Coxiella.</title>
        <authorList>
            <person name="Beare P.A."/>
            <person name="Unsworth N."/>
            <person name="Andoh M."/>
            <person name="Voth D.E."/>
            <person name="Omsland A."/>
            <person name="Gilk S.D."/>
            <person name="Williams K.P."/>
            <person name="Sobral B.W."/>
            <person name="Kupko J.J. III"/>
            <person name="Porcella S.F."/>
            <person name="Samuel J.E."/>
            <person name="Heinzen R.A."/>
        </authorList>
    </citation>
    <scope>NUCLEOTIDE SEQUENCE [LARGE SCALE GENOMIC DNA]</scope>
    <source>
        <strain>CbuK_Q154</strain>
    </source>
</reference>
<sequence>MLMQIADFEIGLNNPLFLIAGPCVIESEALVMDVAGELKSITQQLDMPFIFKASFDKANRSSHLSYRGPGIEKGLTILEKVKKTLEVPIITDVHEDTPLQEVAAVVDVLQTPAFLCRQSNFIRSVAACGKPVNIKKGQFLAPWEMKQVVAKAWATGNKKIMVCERGYSFGYNNLISDMRALAILRETACPVIFDATHSVQLPGGHGTSSGGQREFVPVLARAATAAGIAGIFMETHPDPDRALSDGPNSWPLAKMQPLLETLKELDKVVKNAGFLEQSSE</sequence>
<dbReference type="EC" id="2.5.1.55" evidence="1"/>
<dbReference type="EMBL" id="CP001020">
    <property type="protein sequence ID" value="ACJ19637.1"/>
    <property type="molecule type" value="Genomic_DNA"/>
</dbReference>
<dbReference type="RefSeq" id="WP_012570635.1">
    <property type="nucleotide sequence ID" value="NC_011528.1"/>
</dbReference>
<dbReference type="SMR" id="B6J4X2"/>
<dbReference type="KEGG" id="cbc:CbuK_0335"/>
<dbReference type="HOGENOM" id="CLU_036666_0_0_6"/>
<dbReference type="UniPathway" id="UPA00030"/>
<dbReference type="UniPathway" id="UPA00357">
    <property type="reaction ID" value="UER00474"/>
</dbReference>
<dbReference type="GO" id="GO:0005737">
    <property type="term" value="C:cytoplasm"/>
    <property type="evidence" value="ECO:0007669"/>
    <property type="project" value="UniProtKB-SubCell"/>
</dbReference>
<dbReference type="GO" id="GO:0008676">
    <property type="term" value="F:3-deoxy-8-phosphooctulonate synthase activity"/>
    <property type="evidence" value="ECO:0007669"/>
    <property type="project" value="UniProtKB-UniRule"/>
</dbReference>
<dbReference type="GO" id="GO:0019294">
    <property type="term" value="P:keto-3-deoxy-D-manno-octulosonic acid biosynthetic process"/>
    <property type="evidence" value="ECO:0007669"/>
    <property type="project" value="UniProtKB-UniRule"/>
</dbReference>
<dbReference type="Gene3D" id="3.20.20.70">
    <property type="entry name" value="Aldolase class I"/>
    <property type="match status" value="1"/>
</dbReference>
<dbReference type="HAMAP" id="MF_00056">
    <property type="entry name" value="KDO8P_synth"/>
    <property type="match status" value="1"/>
</dbReference>
<dbReference type="InterPro" id="IPR013785">
    <property type="entry name" value="Aldolase_TIM"/>
</dbReference>
<dbReference type="InterPro" id="IPR006218">
    <property type="entry name" value="DAHP1/KDSA"/>
</dbReference>
<dbReference type="InterPro" id="IPR006269">
    <property type="entry name" value="KDO8P_synthase"/>
</dbReference>
<dbReference type="NCBIfam" id="TIGR01362">
    <property type="entry name" value="KDO8P_synth"/>
    <property type="match status" value="1"/>
</dbReference>
<dbReference type="NCBIfam" id="NF003543">
    <property type="entry name" value="PRK05198.1"/>
    <property type="match status" value="1"/>
</dbReference>
<dbReference type="PANTHER" id="PTHR21057">
    <property type="entry name" value="PHOSPHO-2-DEHYDRO-3-DEOXYHEPTONATE ALDOLASE"/>
    <property type="match status" value="1"/>
</dbReference>
<dbReference type="Pfam" id="PF00793">
    <property type="entry name" value="DAHP_synth_1"/>
    <property type="match status" value="1"/>
</dbReference>
<dbReference type="SUPFAM" id="SSF51569">
    <property type="entry name" value="Aldolase"/>
    <property type="match status" value="1"/>
</dbReference>